<dbReference type="EC" id="2.7.7.72" evidence="1"/>
<dbReference type="EMBL" id="AE014133">
    <property type="protein sequence ID" value="AAN58614.1"/>
    <property type="molecule type" value="Genomic_DNA"/>
</dbReference>
<dbReference type="RefSeq" id="NP_721308.1">
    <property type="nucleotide sequence ID" value="NC_004350.2"/>
</dbReference>
<dbReference type="RefSeq" id="WP_002262894.1">
    <property type="nucleotide sequence ID" value="NC_004350.2"/>
</dbReference>
<dbReference type="SMR" id="Q8DUL8"/>
<dbReference type="STRING" id="210007.SMU_901"/>
<dbReference type="KEGG" id="smu:SMU_901"/>
<dbReference type="PATRIC" id="fig|210007.7.peg.807"/>
<dbReference type="eggNOG" id="COG0617">
    <property type="taxonomic scope" value="Bacteria"/>
</dbReference>
<dbReference type="HOGENOM" id="CLU_015961_3_0_9"/>
<dbReference type="OrthoDB" id="9805698at2"/>
<dbReference type="PhylomeDB" id="Q8DUL8"/>
<dbReference type="Proteomes" id="UP000002512">
    <property type="component" value="Chromosome"/>
</dbReference>
<dbReference type="GO" id="GO:0005524">
    <property type="term" value="F:ATP binding"/>
    <property type="evidence" value="ECO:0007669"/>
    <property type="project" value="UniProtKB-UniRule"/>
</dbReference>
<dbReference type="GO" id="GO:0004810">
    <property type="term" value="F:CCA tRNA nucleotidyltransferase activity"/>
    <property type="evidence" value="ECO:0007669"/>
    <property type="project" value="UniProtKB-UniRule"/>
</dbReference>
<dbReference type="GO" id="GO:0000287">
    <property type="term" value="F:magnesium ion binding"/>
    <property type="evidence" value="ECO:0007669"/>
    <property type="project" value="UniProtKB-UniRule"/>
</dbReference>
<dbReference type="GO" id="GO:0000049">
    <property type="term" value="F:tRNA binding"/>
    <property type="evidence" value="ECO:0007669"/>
    <property type="project" value="UniProtKB-UniRule"/>
</dbReference>
<dbReference type="GO" id="GO:0042245">
    <property type="term" value="P:RNA repair"/>
    <property type="evidence" value="ECO:0007669"/>
    <property type="project" value="UniProtKB-KW"/>
</dbReference>
<dbReference type="GO" id="GO:0001680">
    <property type="term" value="P:tRNA 3'-terminal CCA addition"/>
    <property type="evidence" value="ECO:0007669"/>
    <property type="project" value="UniProtKB-UniRule"/>
</dbReference>
<dbReference type="CDD" id="cd05398">
    <property type="entry name" value="NT_ClassII-CCAase"/>
    <property type="match status" value="1"/>
</dbReference>
<dbReference type="Gene3D" id="1.10.110.30">
    <property type="match status" value="1"/>
</dbReference>
<dbReference type="Gene3D" id="1.10.246.80">
    <property type="match status" value="1"/>
</dbReference>
<dbReference type="Gene3D" id="1.20.58.560">
    <property type="match status" value="1"/>
</dbReference>
<dbReference type="Gene3D" id="3.30.460.10">
    <property type="entry name" value="Beta Polymerase, domain 2"/>
    <property type="match status" value="1"/>
</dbReference>
<dbReference type="HAMAP" id="MF_01263">
    <property type="entry name" value="CCA_bact_type3"/>
    <property type="match status" value="1"/>
</dbReference>
<dbReference type="InterPro" id="IPR050264">
    <property type="entry name" value="Bact_CCA-adding_enz_type3_sf"/>
</dbReference>
<dbReference type="InterPro" id="IPR032810">
    <property type="entry name" value="CCA-adding_enz_C"/>
</dbReference>
<dbReference type="InterPro" id="IPR023068">
    <property type="entry name" value="CCA-adding_enz_firmicutes"/>
</dbReference>
<dbReference type="InterPro" id="IPR043519">
    <property type="entry name" value="NT_sf"/>
</dbReference>
<dbReference type="InterPro" id="IPR002646">
    <property type="entry name" value="PolA_pol_head_dom"/>
</dbReference>
<dbReference type="InterPro" id="IPR032828">
    <property type="entry name" value="PolyA_RNA-bd"/>
</dbReference>
<dbReference type="NCBIfam" id="NF009814">
    <property type="entry name" value="PRK13299.1"/>
    <property type="match status" value="1"/>
</dbReference>
<dbReference type="PANTHER" id="PTHR46173">
    <property type="entry name" value="CCA TRNA NUCLEOTIDYLTRANSFERASE 1, MITOCHONDRIAL"/>
    <property type="match status" value="1"/>
</dbReference>
<dbReference type="PANTHER" id="PTHR46173:SF1">
    <property type="entry name" value="CCA TRNA NUCLEOTIDYLTRANSFERASE 1, MITOCHONDRIAL"/>
    <property type="match status" value="1"/>
</dbReference>
<dbReference type="Pfam" id="PF01743">
    <property type="entry name" value="PolyA_pol"/>
    <property type="match status" value="1"/>
</dbReference>
<dbReference type="Pfam" id="PF12627">
    <property type="entry name" value="PolyA_pol_RNAbd"/>
    <property type="match status" value="1"/>
</dbReference>
<dbReference type="Pfam" id="PF13735">
    <property type="entry name" value="tRNA_NucTran2_2"/>
    <property type="match status" value="1"/>
</dbReference>
<dbReference type="SUPFAM" id="SSF81301">
    <property type="entry name" value="Nucleotidyltransferase"/>
    <property type="match status" value="1"/>
</dbReference>
<dbReference type="SUPFAM" id="SSF81891">
    <property type="entry name" value="Poly A polymerase C-terminal region-like"/>
    <property type="match status" value="1"/>
</dbReference>
<gene>
    <name evidence="1" type="primary">cca</name>
    <name type="ordered locus">SMU_901</name>
</gene>
<keyword id="KW-0067">ATP-binding</keyword>
<keyword id="KW-0460">Magnesium</keyword>
<keyword id="KW-0479">Metal-binding</keyword>
<keyword id="KW-0547">Nucleotide-binding</keyword>
<keyword id="KW-0548">Nucleotidyltransferase</keyword>
<keyword id="KW-1185">Reference proteome</keyword>
<keyword id="KW-0692">RNA repair</keyword>
<keyword id="KW-0694">RNA-binding</keyword>
<keyword id="KW-0808">Transferase</keyword>
<keyword id="KW-0819">tRNA processing</keyword>
<sequence length="401" mass="46084">MRLKHLPSEFQEALPVLEKIKAAGFEAYFVGGSVRDVLLGHPIHDVDIASSSYPEETKKIFPRTVDIGIEHGTVLVLENGHDYEVTTFRTEDLYVDYRRPSQVSFVRSLEEDLKRRDFTINAFALDEKANIIDKFNGLVDLEQKILRAVGNAAERFNEDALRIMRGLRFAAQLNFDIEKKTFIAMREHAPLLEKISVERSFIEFDKLLRAPYWRKGINCLIASQAYDYLPLLQSTADKWQQLLTDLPEDFTFSTSEQAWAAVLLYLNVENPRSFLKSWKTSNDFQKTVEKLLAIYRLREDRQIKKTDVYQYSATLLTLVEELRQAQGLAVDFEHIKELDEALTIHDKHEIVVKGGDLMAAFDLKPGPDLGKILNQIESFIVAGNLANERQAILDFVRKEID</sequence>
<proteinExistence type="inferred from homology"/>
<reference key="1">
    <citation type="journal article" date="2002" name="Proc. Natl. Acad. Sci. U.S.A.">
        <title>Genome sequence of Streptococcus mutans UA159, a cariogenic dental pathogen.</title>
        <authorList>
            <person name="Ajdic D.J."/>
            <person name="McShan W.M."/>
            <person name="McLaughlin R.E."/>
            <person name="Savic G."/>
            <person name="Chang J."/>
            <person name="Carson M.B."/>
            <person name="Primeaux C."/>
            <person name="Tian R."/>
            <person name="Kenton S."/>
            <person name="Jia H.G."/>
            <person name="Lin S.P."/>
            <person name="Qian Y."/>
            <person name="Li S."/>
            <person name="Zhu H."/>
            <person name="Najar F.Z."/>
            <person name="Lai H."/>
            <person name="White J."/>
            <person name="Roe B.A."/>
            <person name="Ferretti J.J."/>
        </authorList>
    </citation>
    <scope>NUCLEOTIDE SEQUENCE [LARGE SCALE GENOMIC DNA]</scope>
    <source>
        <strain>ATCC 700610 / UA159</strain>
    </source>
</reference>
<name>CCA_STRMU</name>
<comment type="function">
    <text evidence="1">Catalyzes the addition and repair of the essential 3'-terminal CCA sequence in tRNAs without using a nucleic acid template. Adds these three nucleotides in the order of C, C, and A to the tRNA nucleotide-73, using CTP and ATP as substrates and producing inorganic pyrophosphate. tRNA 3'-terminal CCA addition is required both for tRNA processing and repair. Also involved in tRNA surveillance by mediating tandem CCA addition to generate a CCACCA at the 3' terminus of unstable tRNAs. While stable tRNAs receive only 3'-terminal CCA, unstable tRNAs are marked with CCACCA and rapidly degraded.</text>
</comment>
<comment type="catalytic activity">
    <reaction evidence="1">
        <text>a tRNA precursor + 2 CTP + ATP = a tRNA with a 3' CCA end + 3 diphosphate</text>
        <dbReference type="Rhea" id="RHEA:14433"/>
        <dbReference type="Rhea" id="RHEA-COMP:10465"/>
        <dbReference type="Rhea" id="RHEA-COMP:10468"/>
        <dbReference type="ChEBI" id="CHEBI:30616"/>
        <dbReference type="ChEBI" id="CHEBI:33019"/>
        <dbReference type="ChEBI" id="CHEBI:37563"/>
        <dbReference type="ChEBI" id="CHEBI:74896"/>
        <dbReference type="ChEBI" id="CHEBI:83071"/>
        <dbReference type="EC" id="2.7.7.72"/>
    </reaction>
</comment>
<comment type="catalytic activity">
    <reaction evidence="1">
        <text>a tRNA with a 3' CCA end + 2 CTP + ATP = a tRNA with a 3' CCACCA end + 3 diphosphate</text>
        <dbReference type="Rhea" id="RHEA:76235"/>
        <dbReference type="Rhea" id="RHEA-COMP:10468"/>
        <dbReference type="Rhea" id="RHEA-COMP:18655"/>
        <dbReference type="ChEBI" id="CHEBI:30616"/>
        <dbReference type="ChEBI" id="CHEBI:33019"/>
        <dbReference type="ChEBI" id="CHEBI:37563"/>
        <dbReference type="ChEBI" id="CHEBI:83071"/>
        <dbReference type="ChEBI" id="CHEBI:195187"/>
    </reaction>
    <physiologicalReaction direction="left-to-right" evidence="1">
        <dbReference type="Rhea" id="RHEA:76236"/>
    </physiologicalReaction>
</comment>
<comment type="cofactor">
    <cofactor evidence="1">
        <name>Mg(2+)</name>
        <dbReference type="ChEBI" id="CHEBI:18420"/>
    </cofactor>
</comment>
<comment type="subunit">
    <text evidence="1">Homodimer.</text>
</comment>
<comment type="miscellaneous">
    <text evidence="1">A single active site specifically recognizes both ATP and CTP and is responsible for their addition.</text>
</comment>
<comment type="similarity">
    <text evidence="1">Belongs to the tRNA nucleotidyltransferase/poly(A) polymerase family. Bacterial CCA-adding enzyme type 3 subfamily.</text>
</comment>
<protein>
    <recommendedName>
        <fullName evidence="1">CCA-adding enzyme</fullName>
        <ecNumber evidence="1">2.7.7.72</ecNumber>
    </recommendedName>
    <alternativeName>
        <fullName evidence="1">CCA tRNA nucleotidyltransferase</fullName>
    </alternativeName>
    <alternativeName>
        <fullName evidence="1">tRNA CCA-pyrophosphorylase</fullName>
    </alternativeName>
    <alternativeName>
        <fullName evidence="1">tRNA adenylyl-/cytidylyl- transferase</fullName>
    </alternativeName>
    <alternativeName>
        <fullName evidence="1">tRNA nucleotidyltransferase</fullName>
    </alternativeName>
    <alternativeName>
        <fullName evidence="1">tRNA-NT</fullName>
    </alternativeName>
</protein>
<accession>Q8DUL8</accession>
<feature type="chain" id="PRO_0000139055" description="CCA-adding enzyme">
    <location>
        <begin position="1"/>
        <end position="401"/>
    </location>
</feature>
<feature type="binding site" evidence="1">
    <location>
        <position position="32"/>
    </location>
    <ligand>
        <name>ATP</name>
        <dbReference type="ChEBI" id="CHEBI:30616"/>
    </ligand>
</feature>
<feature type="binding site" evidence="1">
    <location>
        <position position="32"/>
    </location>
    <ligand>
        <name>CTP</name>
        <dbReference type="ChEBI" id="CHEBI:37563"/>
    </ligand>
</feature>
<feature type="binding site" evidence="1">
    <location>
        <position position="35"/>
    </location>
    <ligand>
        <name>ATP</name>
        <dbReference type="ChEBI" id="CHEBI:30616"/>
    </ligand>
</feature>
<feature type="binding site" evidence="1">
    <location>
        <position position="35"/>
    </location>
    <ligand>
        <name>CTP</name>
        <dbReference type="ChEBI" id="CHEBI:37563"/>
    </ligand>
</feature>
<feature type="binding site" evidence="1">
    <location>
        <position position="45"/>
    </location>
    <ligand>
        <name>Mg(2+)</name>
        <dbReference type="ChEBI" id="CHEBI:18420"/>
    </ligand>
</feature>
<feature type="binding site" evidence="1">
    <location>
        <position position="47"/>
    </location>
    <ligand>
        <name>Mg(2+)</name>
        <dbReference type="ChEBI" id="CHEBI:18420"/>
    </ligand>
</feature>
<feature type="binding site" evidence="1">
    <location>
        <position position="116"/>
    </location>
    <ligand>
        <name>ATP</name>
        <dbReference type="ChEBI" id="CHEBI:30616"/>
    </ligand>
</feature>
<feature type="binding site" evidence="1">
    <location>
        <position position="116"/>
    </location>
    <ligand>
        <name>CTP</name>
        <dbReference type="ChEBI" id="CHEBI:37563"/>
    </ligand>
</feature>
<feature type="binding site" evidence="1">
    <location>
        <position position="159"/>
    </location>
    <ligand>
        <name>ATP</name>
        <dbReference type="ChEBI" id="CHEBI:30616"/>
    </ligand>
</feature>
<feature type="binding site" evidence="1">
    <location>
        <position position="159"/>
    </location>
    <ligand>
        <name>CTP</name>
        <dbReference type="ChEBI" id="CHEBI:37563"/>
    </ligand>
</feature>
<feature type="binding site" evidence="1">
    <location>
        <position position="162"/>
    </location>
    <ligand>
        <name>ATP</name>
        <dbReference type="ChEBI" id="CHEBI:30616"/>
    </ligand>
</feature>
<feature type="binding site" evidence="1">
    <location>
        <position position="162"/>
    </location>
    <ligand>
        <name>CTP</name>
        <dbReference type="ChEBI" id="CHEBI:37563"/>
    </ligand>
</feature>
<feature type="binding site" evidence="1">
    <location>
        <position position="165"/>
    </location>
    <ligand>
        <name>ATP</name>
        <dbReference type="ChEBI" id="CHEBI:30616"/>
    </ligand>
</feature>
<feature type="binding site" evidence="1">
    <location>
        <position position="165"/>
    </location>
    <ligand>
        <name>CTP</name>
        <dbReference type="ChEBI" id="CHEBI:37563"/>
    </ligand>
</feature>
<feature type="binding site" evidence="1">
    <location>
        <position position="168"/>
    </location>
    <ligand>
        <name>ATP</name>
        <dbReference type="ChEBI" id="CHEBI:30616"/>
    </ligand>
</feature>
<feature type="binding site" evidence="1">
    <location>
        <position position="168"/>
    </location>
    <ligand>
        <name>CTP</name>
        <dbReference type="ChEBI" id="CHEBI:37563"/>
    </ligand>
</feature>
<organism>
    <name type="scientific">Streptococcus mutans serotype c (strain ATCC 700610 / UA159)</name>
    <dbReference type="NCBI Taxonomy" id="210007"/>
    <lineage>
        <taxon>Bacteria</taxon>
        <taxon>Bacillati</taxon>
        <taxon>Bacillota</taxon>
        <taxon>Bacilli</taxon>
        <taxon>Lactobacillales</taxon>
        <taxon>Streptococcaceae</taxon>
        <taxon>Streptococcus</taxon>
    </lineage>
</organism>
<evidence type="ECO:0000255" key="1">
    <source>
        <dbReference type="HAMAP-Rule" id="MF_01263"/>
    </source>
</evidence>